<protein>
    <recommendedName>
        <fullName>E3 ubiquitin-protein ligase NEURL1B</fullName>
        <ecNumber>2.3.2.27</ecNumber>
    </recommendedName>
    <alternativeName>
        <fullName>Neuralized-2</fullName>
        <shortName>NEUR2</shortName>
    </alternativeName>
    <alternativeName>
        <fullName>Neuralized-like protein 1B</fullName>
    </alternativeName>
    <alternativeName>
        <fullName>Neuralized-like protein 3</fullName>
    </alternativeName>
    <alternativeName>
        <fullName evidence="6">RING-type E3 ubiquitin transferase NEURL1B</fullName>
    </alternativeName>
</protein>
<keyword id="KW-0025">Alternative splicing</keyword>
<keyword id="KW-0963">Cytoplasm</keyword>
<keyword id="KW-0479">Metal-binding</keyword>
<keyword id="KW-0914">Notch signaling pathway</keyword>
<keyword id="KW-0597">Phosphoprotein</keyword>
<keyword id="KW-1267">Proteomics identification</keyword>
<keyword id="KW-1185">Reference proteome</keyword>
<keyword id="KW-0677">Repeat</keyword>
<keyword id="KW-0808">Transferase</keyword>
<keyword id="KW-0833">Ubl conjugation pathway</keyword>
<keyword id="KW-0862">Zinc</keyword>
<keyword id="KW-0863">Zinc-finger</keyword>
<dbReference type="EC" id="2.3.2.27"/>
<dbReference type="EMBL" id="GQ414757">
    <property type="protein sequence ID" value="ACV53563.1"/>
    <property type="molecule type" value="mRNA"/>
</dbReference>
<dbReference type="EMBL" id="GQ414758">
    <property type="protein sequence ID" value="ACV53564.1"/>
    <property type="molecule type" value="mRNA"/>
</dbReference>
<dbReference type="EMBL" id="GQ414759">
    <property type="protein sequence ID" value="ACV53565.1"/>
    <property type="molecule type" value="mRNA"/>
</dbReference>
<dbReference type="EMBL" id="AC027309">
    <property type="status" value="NOT_ANNOTATED_CDS"/>
    <property type="molecule type" value="Genomic_DNA"/>
</dbReference>
<dbReference type="CCDS" id="CCDS47342.1">
    <molecule id="A8MQ27-1"/>
</dbReference>
<dbReference type="CCDS" id="CCDS78085.1">
    <molecule id="A8MQ27-3"/>
</dbReference>
<dbReference type="CCDS" id="CCDS83042.1">
    <molecule id="A8MQ27-2"/>
</dbReference>
<dbReference type="RefSeq" id="NP_001136123.1">
    <molecule id="A8MQ27-1"/>
    <property type="nucleotide sequence ID" value="NM_001142651.3"/>
</dbReference>
<dbReference type="RefSeq" id="NP_001295106.1">
    <molecule id="A8MQ27-2"/>
    <property type="nucleotide sequence ID" value="NM_001308177.2"/>
</dbReference>
<dbReference type="RefSeq" id="NP_001295107.1">
    <molecule id="A8MQ27-3"/>
    <property type="nucleotide sequence ID" value="NM_001308178.2"/>
</dbReference>
<dbReference type="SMR" id="A8MQ27"/>
<dbReference type="BioGRID" id="119989">
    <property type="interactions" value="6"/>
</dbReference>
<dbReference type="FunCoup" id="A8MQ27">
    <property type="interactions" value="331"/>
</dbReference>
<dbReference type="IntAct" id="A8MQ27">
    <property type="interactions" value="1"/>
</dbReference>
<dbReference type="STRING" id="9606.ENSP00000358815"/>
<dbReference type="GlyGen" id="A8MQ27">
    <property type="glycosylation" value="1 site, 1 O-linked glycan (1 site)"/>
</dbReference>
<dbReference type="iPTMnet" id="A8MQ27"/>
<dbReference type="PhosphoSitePlus" id="A8MQ27"/>
<dbReference type="BioMuta" id="NEURL1B"/>
<dbReference type="jPOST" id="A8MQ27"/>
<dbReference type="MassIVE" id="A8MQ27"/>
<dbReference type="PaxDb" id="9606-ENSP00000358815"/>
<dbReference type="PeptideAtlas" id="A8MQ27"/>
<dbReference type="ProteomicsDB" id="1935">
    <molecule id="A8MQ27-1"/>
</dbReference>
<dbReference type="ProteomicsDB" id="7613"/>
<dbReference type="Antibodypedia" id="49674">
    <property type="antibodies" value="42 antibodies from 11 providers"/>
</dbReference>
<dbReference type="DNASU" id="54492"/>
<dbReference type="Ensembl" id="ENST00000369800.6">
    <molecule id="A8MQ27-1"/>
    <property type="protein sequence ID" value="ENSP00000358815.5"/>
    <property type="gene ID" value="ENSG00000214357.9"/>
</dbReference>
<dbReference type="Ensembl" id="ENST00000520919.5">
    <molecule id="A8MQ27-3"/>
    <property type="protein sequence ID" value="ENSP00000429797.1"/>
    <property type="gene ID" value="ENSG00000214357.9"/>
</dbReference>
<dbReference type="Ensembl" id="ENST00000522853.5">
    <molecule id="A8MQ27-2"/>
    <property type="protein sequence ID" value="ENSP00000430001.1"/>
    <property type="gene ID" value="ENSG00000214357.9"/>
</dbReference>
<dbReference type="GeneID" id="54492"/>
<dbReference type="KEGG" id="hsa:54492"/>
<dbReference type="MANE-Select" id="ENST00000369800.6">
    <property type="protein sequence ID" value="ENSP00000358815.5"/>
    <property type="RefSeq nucleotide sequence ID" value="NM_001142651.3"/>
    <property type="RefSeq protein sequence ID" value="NP_001136123.1"/>
</dbReference>
<dbReference type="UCSC" id="uc003mbt.4">
    <molecule id="A8MQ27-1"/>
    <property type="organism name" value="human"/>
</dbReference>
<dbReference type="AGR" id="HGNC:35422"/>
<dbReference type="CTD" id="54492"/>
<dbReference type="DisGeNET" id="54492"/>
<dbReference type="GeneCards" id="NEURL1B"/>
<dbReference type="HGNC" id="HGNC:35422">
    <property type="gene designation" value="NEURL1B"/>
</dbReference>
<dbReference type="HPA" id="ENSG00000214357">
    <property type="expression patterns" value="Low tissue specificity"/>
</dbReference>
<dbReference type="MIM" id="615893">
    <property type="type" value="gene"/>
</dbReference>
<dbReference type="neXtProt" id="NX_A8MQ27"/>
<dbReference type="OpenTargets" id="ENSG00000214357"/>
<dbReference type="PharmGKB" id="PA164723819"/>
<dbReference type="VEuPathDB" id="HostDB:ENSG00000214357"/>
<dbReference type="eggNOG" id="KOG4172">
    <property type="taxonomic scope" value="Eukaryota"/>
</dbReference>
<dbReference type="eggNOG" id="KOG4625">
    <property type="taxonomic scope" value="Eukaryota"/>
</dbReference>
<dbReference type="GeneTree" id="ENSGT00940000157079"/>
<dbReference type="HOGENOM" id="CLU_090535_0_0_1"/>
<dbReference type="InParanoid" id="A8MQ27"/>
<dbReference type="OMA" id="SHDNANF"/>
<dbReference type="OrthoDB" id="6078042at2759"/>
<dbReference type="PAN-GO" id="A8MQ27">
    <property type="GO annotations" value="3 GO annotations based on evolutionary models"/>
</dbReference>
<dbReference type="PhylomeDB" id="A8MQ27"/>
<dbReference type="TreeFam" id="TF314368"/>
<dbReference type="PathwayCommons" id="A8MQ27"/>
<dbReference type="Reactome" id="R-HSA-2122948">
    <property type="pathway name" value="Activated NOTCH1 Transmits Signal to the Nucleus"/>
</dbReference>
<dbReference type="Reactome" id="R-HSA-2644606">
    <property type="pathway name" value="Constitutive Signaling by NOTCH1 PEST Domain Mutants"/>
</dbReference>
<dbReference type="Reactome" id="R-HSA-2691232">
    <property type="pathway name" value="Constitutive Signaling by NOTCH1 HD Domain Mutants"/>
</dbReference>
<dbReference type="Reactome" id="R-HSA-2894862">
    <property type="pathway name" value="Constitutive Signaling by NOTCH1 HD+PEST Domain Mutants"/>
</dbReference>
<dbReference type="Reactome" id="R-HSA-2979096">
    <property type="pathway name" value="NOTCH2 Activation and Transmission of Signal to the Nucleus"/>
</dbReference>
<dbReference type="Reactome" id="R-HSA-9013507">
    <property type="pathway name" value="NOTCH3 Activation and Transmission of Signal to the Nucleus"/>
</dbReference>
<dbReference type="SIGNOR" id="A8MQ27"/>
<dbReference type="UniPathway" id="UPA00143"/>
<dbReference type="BioGRID-ORCS" id="54492">
    <property type="hits" value="12 hits in 1184 CRISPR screens"/>
</dbReference>
<dbReference type="ChiTaRS" id="NEURL1B">
    <property type="organism name" value="human"/>
</dbReference>
<dbReference type="GenomeRNAi" id="54492"/>
<dbReference type="Pharos" id="A8MQ27">
    <property type="development level" value="Tdark"/>
</dbReference>
<dbReference type="PRO" id="PR:A8MQ27"/>
<dbReference type="Proteomes" id="UP000005640">
    <property type="component" value="Chromosome 5"/>
</dbReference>
<dbReference type="RNAct" id="A8MQ27">
    <property type="molecule type" value="protein"/>
</dbReference>
<dbReference type="Bgee" id="ENSG00000214357">
    <property type="expression patterns" value="Expressed in ileal mucosa and 179 other cell types or tissues"/>
</dbReference>
<dbReference type="GO" id="GO:0015629">
    <property type="term" value="C:actin cytoskeleton"/>
    <property type="evidence" value="ECO:0000314"/>
    <property type="project" value="HPA"/>
</dbReference>
<dbReference type="GO" id="GO:0005829">
    <property type="term" value="C:cytosol"/>
    <property type="evidence" value="ECO:0000314"/>
    <property type="project" value="HPA"/>
</dbReference>
<dbReference type="GO" id="GO:0005769">
    <property type="term" value="C:early endosome"/>
    <property type="evidence" value="ECO:0000250"/>
    <property type="project" value="UniProtKB"/>
</dbReference>
<dbReference type="GO" id="GO:0061630">
    <property type="term" value="F:ubiquitin protein ligase activity"/>
    <property type="evidence" value="ECO:0000250"/>
    <property type="project" value="UniProtKB"/>
</dbReference>
<dbReference type="GO" id="GO:0008270">
    <property type="term" value="F:zinc ion binding"/>
    <property type="evidence" value="ECO:0007669"/>
    <property type="project" value="UniProtKB-KW"/>
</dbReference>
<dbReference type="GO" id="GO:0007219">
    <property type="term" value="P:Notch signaling pathway"/>
    <property type="evidence" value="ECO:0007669"/>
    <property type="project" value="UniProtKB-KW"/>
</dbReference>
<dbReference type="GO" id="GO:0016567">
    <property type="term" value="P:protein ubiquitination"/>
    <property type="evidence" value="ECO:0007669"/>
    <property type="project" value="UniProtKB-UniPathway"/>
</dbReference>
<dbReference type="GO" id="GO:0070086">
    <property type="term" value="P:ubiquitin-dependent endocytosis"/>
    <property type="evidence" value="ECO:0000250"/>
    <property type="project" value="UniProtKB"/>
</dbReference>
<dbReference type="CDD" id="cd16786">
    <property type="entry name" value="mRING-HC-C3HC5_NEU1B"/>
    <property type="match status" value="1"/>
</dbReference>
<dbReference type="FunFam" id="2.60.120.920:FF:000005">
    <property type="entry name" value="Putative E3 ubiquitin-protein ligase NEURL1B"/>
    <property type="match status" value="1"/>
</dbReference>
<dbReference type="FunFam" id="2.60.120.920:FF:000020">
    <property type="entry name" value="Putative E3 ubiquitin-protein ligase NEURL1B"/>
    <property type="match status" value="1"/>
</dbReference>
<dbReference type="FunFam" id="3.30.40.10:FF:000056">
    <property type="entry name" value="Putative E3 ubiquitin-protein ligase NEURL1B"/>
    <property type="match status" value="1"/>
</dbReference>
<dbReference type="Gene3D" id="2.60.120.920">
    <property type="match status" value="2"/>
</dbReference>
<dbReference type="Gene3D" id="3.30.40.10">
    <property type="entry name" value="Zinc/RING finger domain, C3HC4 (zinc finger)"/>
    <property type="match status" value="1"/>
</dbReference>
<dbReference type="InterPro" id="IPR043136">
    <property type="entry name" value="B30.2/SPRY_sf"/>
</dbReference>
<dbReference type="InterPro" id="IPR037962">
    <property type="entry name" value="Neuralized"/>
</dbReference>
<dbReference type="InterPro" id="IPR006573">
    <property type="entry name" value="NHR_dom"/>
</dbReference>
<dbReference type="InterPro" id="IPR001841">
    <property type="entry name" value="Znf_RING"/>
</dbReference>
<dbReference type="InterPro" id="IPR013083">
    <property type="entry name" value="Znf_RING/FYVE/PHD"/>
</dbReference>
<dbReference type="PANTHER" id="PTHR12429:SF10">
    <property type="entry name" value="E3 UBIQUITIN-PROTEIN LIGASE NEURL1B"/>
    <property type="match status" value="1"/>
</dbReference>
<dbReference type="PANTHER" id="PTHR12429">
    <property type="entry name" value="NEURALIZED"/>
    <property type="match status" value="1"/>
</dbReference>
<dbReference type="Pfam" id="PF07177">
    <property type="entry name" value="Neuralized"/>
    <property type="match status" value="2"/>
</dbReference>
<dbReference type="Pfam" id="PF13920">
    <property type="entry name" value="zf-C3HC4_3"/>
    <property type="match status" value="1"/>
</dbReference>
<dbReference type="SMART" id="SM00588">
    <property type="entry name" value="NEUZ"/>
    <property type="match status" value="2"/>
</dbReference>
<dbReference type="SUPFAM" id="SSF57850">
    <property type="entry name" value="RING/U-box"/>
    <property type="match status" value="1"/>
</dbReference>
<dbReference type="PROSITE" id="PS51065">
    <property type="entry name" value="NHR"/>
    <property type="match status" value="2"/>
</dbReference>
<dbReference type="PROSITE" id="PS50089">
    <property type="entry name" value="ZF_RING_2"/>
    <property type="match status" value="1"/>
</dbReference>
<organism>
    <name type="scientific">Homo sapiens</name>
    <name type="common">Human</name>
    <dbReference type="NCBI Taxonomy" id="9606"/>
    <lineage>
        <taxon>Eukaryota</taxon>
        <taxon>Metazoa</taxon>
        <taxon>Chordata</taxon>
        <taxon>Craniata</taxon>
        <taxon>Vertebrata</taxon>
        <taxon>Euteleostomi</taxon>
        <taxon>Mammalia</taxon>
        <taxon>Eutheria</taxon>
        <taxon>Euarchontoglires</taxon>
        <taxon>Primates</taxon>
        <taxon>Haplorrhini</taxon>
        <taxon>Catarrhini</taxon>
        <taxon>Hominidae</taxon>
        <taxon>Homo</taxon>
    </lineage>
</organism>
<comment type="function">
    <text evidence="4">E3 ubiquitin-protein ligase involved in regulation of the Notch pathway through influencing the stability and activity of several Notch ligands.</text>
</comment>
<comment type="catalytic activity">
    <reaction>
        <text>S-ubiquitinyl-[E2 ubiquitin-conjugating enzyme]-L-cysteine + [acceptor protein]-L-lysine = [E2 ubiquitin-conjugating enzyme]-L-cysteine + N(6)-ubiquitinyl-[acceptor protein]-L-lysine.</text>
        <dbReference type="EC" id="2.3.2.27"/>
    </reaction>
</comment>
<comment type="pathway">
    <text>Protein modification; protein ubiquitination.</text>
</comment>
<comment type="subunit">
    <text evidence="4">Interacts with JAG1, DLL1 and DLL4.</text>
</comment>
<comment type="subcellular location">
    <subcellularLocation>
        <location evidence="4">Cytoplasm</location>
    </subcellularLocation>
</comment>
<comment type="alternative products">
    <event type="alternative splicing"/>
    <isoform>
        <id>A8MQ27-1</id>
        <name>1</name>
        <sequence type="displayed"/>
    </isoform>
    <isoform>
        <id>A8MQ27-2</id>
        <name>2</name>
        <name>delta-NHR1</name>
        <sequence type="described" ref="VSP_044404"/>
    </isoform>
    <isoform>
        <id>A8MQ27-3</id>
        <name>3</name>
        <name>delta-NHR2</name>
        <sequence type="described" ref="VSP_044405"/>
    </isoform>
</comment>
<comment type="tissue specificity">
    <text evidence="4">Highest expression in brain, prostate and small intestine. In the brain the levels are higher in fetal than in adult stage. In the adult brain the highest levels are detected in the olfactory system, cerebellar cortex, optic nerve and the frontal lobe.</text>
</comment>
<accession>A8MQ27</accession>
<accession>C9DQJ5</accession>
<accession>C9DQJ6</accession>
<accession>C9DQJ7</accession>
<sequence>MGNTVHRTLPDPSPPARLLATRPCCGPGPERRPVLGEAPRFHAQAKGKNVRLDGHSRRATRRNSFCNGVTFTQRPIRLYEQVRLRLVAVRPGWSGALRFGFTAHDPSLMSAQDIPKYACPDLVTRPGYWAKALPENLALRDTVLAYWADRHGRVFYSVNDGEPVLFHCGVAVGGPLWALIDVYGITDEVQLLESAFADTLTPARLSQARFSACLPPSSHDAANFDNNELENNQVVAKLGHLALGRAPGPPPADAAAAAIPCGPRERPRPASSPALLEADLRFHATRGPDVSLSADRKVACAPRPDGGRTLVFSERPLRPGESLFVEVGRPGLAAPGALAFGITSCDPGVLRPNELPADPDALLDRKEYWVVARAGPVPSGGDALSFTLRPGGDVLLGINGRPRGRLLCVDTTQALWAFFAVRGGVAGQLRLLGTLQSSPATTTPSGSLSGSQDDSDSDMTFSVNQSSSASESSLVTAPSSPLSPPVSPVFSPPEPAGIKNGECTVCFDGEVDTVIYTCGHMCLCHSCGLRLKRQARACCPICRRPIKDVIKIYRP</sequence>
<gene>
    <name type="primary">NEURL1B</name>
    <name type="synonym">NEURL3</name>
</gene>
<reference key="1">
    <citation type="journal article" date="2009" name="Biochem. Biophys. Res. Commun.">
        <title>Neuralized-2: Expression in human and rodents and interaction with Delta-like ligands.</title>
        <authorList>
            <person name="Rullinkov G."/>
            <person name="Tamme R."/>
            <person name="Sarapuu A."/>
            <person name="Lauren J."/>
            <person name="Sepp M."/>
            <person name="Palm K."/>
            <person name="Timmusk T."/>
        </authorList>
    </citation>
    <scope>NUCLEOTIDE SEQUENCE [MRNA] (ISOFORMS 1; 2 AND 3)</scope>
    <scope>FUNCTION</scope>
    <scope>SUBCELLULAR LOCATION</scope>
    <scope>ALTERNATIVE SPLICING</scope>
    <scope>INTERACTION WITH DLL1 AND DLL4</scope>
    <scope>TISSUE SPECIFICITY</scope>
</reference>
<reference key="2">
    <citation type="journal article" date="2004" name="Nature">
        <title>The DNA sequence and comparative analysis of human chromosome 5.</title>
        <authorList>
            <person name="Schmutz J."/>
            <person name="Martin J."/>
            <person name="Terry A."/>
            <person name="Couronne O."/>
            <person name="Grimwood J."/>
            <person name="Lowry S."/>
            <person name="Gordon L.A."/>
            <person name="Scott D."/>
            <person name="Xie G."/>
            <person name="Huang W."/>
            <person name="Hellsten U."/>
            <person name="Tran-Gyamfi M."/>
            <person name="She X."/>
            <person name="Prabhakar S."/>
            <person name="Aerts A."/>
            <person name="Altherr M."/>
            <person name="Bajorek E."/>
            <person name="Black S."/>
            <person name="Branscomb E."/>
            <person name="Caoile C."/>
            <person name="Challacombe J.F."/>
            <person name="Chan Y.M."/>
            <person name="Denys M."/>
            <person name="Detter J.C."/>
            <person name="Escobar J."/>
            <person name="Flowers D."/>
            <person name="Fotopulos D."/>
            <person name="Glavina T."/>
            <person name="Gomez M."/>
            <person name="Gonzales E."/>
            <person name="Goodstein D."/>
            <person name="Grigoriev I."/>
            <person name="Groza M."/>
            <person name="Hammon N."/>
            <person name="Hawkins T."/>
            <person name="Haydu L."/>
            <person name="Israni S."/>
            <person name="Jett J."/>
            <person name="Kadner K."/>
            <person name="Kimball H."/>
            <person name="Kobayashi A."/>
            <person name="Lopez F."/>
            <person name="Lou Y."/>
            <person name="Martinez D."/>
            <person name="Medina C."/>
            <person name="Morgan J."/>
            <person name="Nandkeshwar R."/>
            <person name="Noonan J.P."/>
            <person name="Pitluck S."/>
            <person name="Pollard M."/>
            <person name="Predki P."/>
            <person name="Priest J."/>
            <person name="Ramirez L."/>
            <person name="Retterer J."/>
            <person name="Rodriguez A."/>
            <person name="Rogers S."/>
            <person name="Salamov A."/>
            <person name="Salazar A."/>
            <person name="Thayer N."/>
            <person name="Tice H."/>
            <person name="Tsai M."/>
            <person name="Ustaszewska A."/>
            <person name="Vo N."/>
            <person name="Wheeler J."/>
            <person name="Wu K."/>
            <person name="Yang J."/>
            <person name="Dickson M."/>
            <person name="Cheng J.-F."/>
            <person name="Eichler E.E."/>
            <person name="Olsen A."/>
            <person name="Pennacchio L.A."/>
            <person name="Rokhsar D.S."/>
            <person name="Richardson P."/>
            <person name="Lucas S.M."/>
            <person name="Myers R.M."/>
            <person name="Rubin E.M."/>
        </authorList>
    </citation>
    <scope>NUCLEOTIDE SEQUENCE [LARGE SCALE GENOMIC DNA]</scope>
</reference>
<reference key="3">
    <citation type="journal article" date="2014" name="J. Proteomics">
        <title>An enzyme assisted RP-RPLC approach for in-depth analysis of human liver phosphoproteome.</title>
        <authorList>
            <person name="Bian Y."/>
            <person name="Song C."/>
            <person name="Cheng K."/>
            <person name="Dong M."/>
            <person name="Wang F."/>
            <person name="Huang J."/>
            <person name="Sun D."/>
            <person name="Wang L."/>
            <person name="Ye M."/>
            <person name="Zou H."/>
        </authorList>
    </citation>
    <scope>PHOSPHORYLATION [LARGE SCALE ANALYSIS] AT THR-199</scope>
    <scope>IDENTIFICATION BY MASS SPECTROMETRY [LARGE SCALE ANALYSIS]</scope>
    <source>
        <tissue>Liver</tissue>
    </source>
</reference>
<evidence type="ECO:0000255" key="1">
    <source>
        <dbReference type="PROSITE-ProRule" id="PRU00175"/>
    </source>
</evidence>
<evidence type="ECO:0000255" key="2">
    <source>
        <dbReference type="PROSITE-ProRule" id="PRU00400"/>
    </source>
</evidence>
<evidence type="ECO:0000256" key="3">
    <source>
        <dbReference type="SAM" id="MobiDB-lite"/>
    </source>
</evidence>
<evidence type="ECO:0000269" key="4">
    <source>
    </source>
</evidence>
<evidence type="ECO:0000303" key="5">
    <source>
    </source>
</evidence>
<evidence type="ECO:0000305" key="6"/>
<evidence type="ECO:0007744" key="7">
    <source>
    </source>
</evidence>
<name>NEU1B_HUMAN</name>
<proteinExistence type="evidence at protein level"/>
<feature type="chain" id="PRO_0000349382" description="E3 ubiquitin-protein ligase NEURL1B">
    <location>
        <begin position="1"/>
        <end position="555"/>
    </location>
</feature>
<feature type="domain" description="NHR 1" evidence="2">
    <location>
        <begin position="38"/>
        <end position="194"/>
    </location>
</feature>
<feature type="domain" description="NHR 2" evidence="2">
    <location>
        <begin position="279"/>
        <end position="433"/>
    </location>
</feature>
<feature type="zinc finger region" description="RING-type" evidence="1">
    <location>
        <begin position="503"/>
        <end position="543"/>
    </location>
</feature>
<feature type="region of interest" description="Disordered" evidence="3">
    <location>
        <begin position="436"/>
        <end position="493"/>
    </location>
</feature>
<feature type="compositionally biased region" description="Low complexity" evidence="3">
    <location>
        <begin position="462"/>
        <end position="480"/>
    </location>
</feature>
<feature type="compositionally biased region" description="Pro residues" evidence="3">
    <location>
        <begin position="481"/>
        <end position="493"/>
    </location>
</feature>
<feature type="modified residue" description="Phosphothreonine" evidence="7">
    <location>
        <position position="199"/>
    </location>
</feature>
<feature type="splice variant" id="VSP_044404" description="In isoform 2." evidence="5">
    <location>
        <begin position="11"/>
        <end position="192"/>
    </location>
</feature>
<feature type="splice variant" id="VSP_044405" description="In isoform 3." evidence="5">
    <location>
        <begin position="191"/>
        <end position="430"/>
    </location>
</feature>